<protein>
    <recommendedName>
        <fullName evidence="1">Small ribosomal subunit protein bS20</fullName>
    </recommendedName>
    <alternativeName>
        <fullName evidence="3">30S ribosomal protein S20</fullName>
    </alternativeName>
</protein>
<name>RS20_ACIBS</name>
<gene>
    <name evidence="1" type="primary">rpsT</name>
    <name type="ordered locus">ABSDF1833</name>
</gene>
<dbReference type="EMBL" id="CU468230">
    <property type="protein sequence ID" value="CAP01170.1"/>
    <property type="molecule type" value="Genomic_DNA"/>
</dbReference>
<dbReference type="SMR" id="B0VNU2"/>
<dbReference type="KEGG" id="abm:ABSDF1833"/>
<dbReference type="HOGENOM" id="CLU_160655_4_0_6"/>
<dbReference type="Proteomes" id="UP000001741">
    <property type="component" value="Chromosome"/>
</dbReference>
<dbReference type="GO" id="GO:0005829">
    <property type="term" value="C:cytosol"/>
    <property type="evidence" value="ECO:0007669"/>
    <property type="project" value="TreeGrafter"/>
</dbReference>
<dbReference type="GO" id="GO:0015935">
    <property type="term" value="C:small ribosomal subunit"/>
    <property type="evidence" value="ECO:0007669"/>
    <property type="project" value="TreeGrafter"/>
</dbReference>
<dbReference type="GO" id="GO:0070181">
    <property type="term" value="F:small ribosomal subunit rRNA binding"/>
    <property type="evidence" value="ECO:0007669"/>
    <property type="project" value="TreeGrafter"/>
</dbReference>
<dbReference type="GO" id="GO:0003735">
    <property type="term" value="F:structural constituent of ribosome"/>
    <property type="evidence" value="ECO:0007669"/>
    <property type="project" value="InterPro"/>
</dbReference>
<dbReference type="GO" id="GO:0006412">
    <property type="term" value="P:translation"/>
    <property type="evidence" value="ECO:0007669"/>
    <property type="project" value="UniProtKB-UniRule"/>
</dbReference>
<dbReference type="FunFam" id="1.20.58.110:FF:000001">
    <property type="entry name" value="30S ribosomal protein S20"/>
    <property type="match status" value="1"/>
</dbReference>
<dbReference type="Gene3D" id="1.20.58.110">
    <property type="entry name" value="Ribosomal protein S20"/>
    <property type="match status" value="1"/>
</dbReference>
<dbReference type="HAMAP" id="MF_00500">
    <property type="entry name" value="Ribosomal_bS20"/>
    <property type="match status" value="1"/>
</dbReference>
<dbReference type="InterPro" id="IPR002583">
    <property type="entry name" value="Ribosomal_bS20"/>
</dbReference>
<dbReference type="InterPro" id="IPR036510">
    <property type="entry name" value="Ribosomal_bS20_sf"/>
</dbReference>
<dbReference type="NCBIfam" id="TIGR00029">
    <property type="entry name" value="S20"/>
    <property type="match status" value="1"/>
</dbReference>
<dbReference type="PANTHER" id="PTHR33398">
    <property type="entry name" value="30S RIBOSOMAL PROTEIN S20"/>
    <property type="match status" value="1"/>
</dbReference>
<dbReference type="PANTHER" id="PTHR33398:SF1">
    <property type="entry name" value="SMALL RIBOSOMAL SUBUNIT PROTEIN BS20C"/>
    <property type="match status" value="1"/>
</dbReference>
<dbReference type="Pfam" id="PF01649">
    <property type="entry name" value="Ribosomal_S20p"/>
    <property type="match status" value="1"/>
</dbReference>
<dbReference type="SUPFAM" id="SSF46992">
    <property type="entry name" value="Ribosomal protein S20"/>
    <property type="match status" value="1"/>
</dbReference>
<evidence type="ECO:0000255" key="1">
    <source>
        <dbReference type="HAMAP-Rule" id="MF_00500"/>
    </source>
</evidence>
<evidence type="ECO:0000256" key="2">
    <source>
        <dbReference type="SAM" id="MobiDB-lite"/>
    </source>
</evidence>
<evidence type="ECO:0000305" key="3"/>
<comment type="function">
    <text evidence="1">Binds directly to 16S ribosomal RNA.</text>
</comment>
<comment type="similarity">
    <text evidence="1">Belongs to the bacterial ribosomal protein bS20 family.</text>
</comment>
<accession>B0VNU2</accession>
<proteinExistence type="inferred from homology"/>
<sequence length="88" mass="9699">MANSAQAKKRARQNVKARKHNASLRSMVRTYIKRTLSAIAGGDYAVATEAYKKAVPVIDRMADKGIIHKNKAARHKSRLNAQVKALAN</sequence>
<keyword id="KW-0687">Ribonucleoprotein</keyword>
<keyword id="KW-0689">Ribosomal protein</keyword>
<keyword id="KW-0694">RNA-binding</keyword>
<keyword id="KW-0699">rRNA-binding</keyword>
<organism>
    <name type="scientific">Acinetobacter baumannii (strain SDF)</name>
    <dbReference type="NCBI Taxonomy" id="509170"/>
    <lineage>
        <taxon>Bacteria</taxon>
        <taxon>Pseudomonadati</taxon>
        <taxon>Pseudomonadota</taxon>
        <taxon>Gammaproteobacteria</taxon>
        <taxon>Moraxellales</taxon>
        <taxon>Moraxellaceae</taxon>
        <taxon>Acinetobacter</taxon>
        <taxon>Acinetobacter calcoaceticus/baumannii complex</taxon>
    </lineage>
</organism>
<reference key="1">
    <citation type="journal article" date="2008" name="PLoS ONE">
        <title>Comparative analysis of Acinetobacters: three genomes for three lifestyles.</title>
        <authorList>
            <person name="Vallenet D."/>
            <person name="Nordmann P."/>
            <person name="Barbe V."/>
            <person name="Poirel L."/>
            <person name="Mangenot S."/>
            <person name="Bataille E."/>
            <person name="Dossat C."/>
            <person name="Gas S."/>
            <person name="Kreimeyer A."/>
            <person name="Lenoble P."/>
            <person name="Oztas S."/>
            <person name="Poulain J."/>
            <person name="Segurens B."/>
            <person name="Robert C."/>
            <person name="Abergel C."/>
            <person name="Claverie J.-M."/>
            <person name="Raoult D."/>
            <person name="Medigue C."/>
            <person name="Weissenbach J."/>
            <person name="Cruveiller S."/>
        </authorList>
    </citation>
    <scope>NUCLEOTIDE SEQUENCE [LARGE SCALE GENOMIC DNA]</scope>
    <source>
        <strain>SDF</strain>
    </source>
</reference>
<feature type="chain" id="PRO_1000126385" description="Small ribosomal subunit protein bS20">
    <location>
        <begin position="1"/>
        <end position="88"/>
    </location>
</feature>
<feature type="region of interest" description="Disordered" evidence="2">
    <location>
        <begin position="1"/>
        <end position="21"/>
    </location>
</feature>
<feature type="compositionally biased region" description="Basic residues" evidence="2">
    <location>
        <begin position="7"/>
        <end position="21"/>
    </location>
</feature>